<proteinExistence type="inferred from homology"/>
<comment type="function">
    <text evidence="1">Allows the formation of correctly charged Gln-tRNA(Gln) through the transamidation of misacylated Glu-tRNA(Gln) in the mitochondria. The reaction takes place in the presence of glutamine and ATP through an activated gamma-phospho-Glu-tRNA(Gln).</text>
</comment>
<comment type="catalytic activity">
    <reaction evidence="1">
        <text>L-glutamyl-tRNA(Gln) + L-glutamine + ATP + H2O = L-glutaminyl-tRNA(Gln) + L-glutamate + ADP + phosphate + H(+)</text>
        <dbReference type="Rhea" id="RHEA:17521"/>
        <dbReference type="Rhea" id="RHEA-COMP:9681"/>
        <dbReference type="Rhea" id="RHEA-COMP:9684"/>
        <dbReference type="ChEBI" id="CHEBI:15377"/>
        <dbReference type="ChEBI" id="CHEBI:15378"/>
        <dbReference type="ChEBI" id="CHEBI:29985"/>
        <dbReference type="ChEBI" id="CHEBI:30616"/>
        <dbReference type="ChEBI" id="CHEBI:43474"/>
        <dbReference type="ChEBI" id="CHEBI:58359"/>
        <dbReference type="ChEBI" id="CHEBI:78520"/>
        <dbReference type="ChEBI" id="CHEBI:78521"/>
        <dbReference type="ChEBI" id="CHEBI:456216"/>
        <dbReference type="EC" id="6.3.5.7"/>
    </reaction>
</comment>
<comment type="subunit">
    <text evidence="1">Subunit of the heterotrimeric GatFAB amidotransferase (AdT) complex, composed of A, B and F subunits.</text>
</comment>
<comment type="subcellular location">
    <subcellularLocation>
        <location evidence="1">Mitochondrion</location>
    </subcellularLocation>
</comment>
<comment type="similarity">
    <text evidence="1">Belongs to the amidase family. GatA subfamily.</text>
</comment>
<evidence type="ECO:0000255" key="1">
    <source>
        <dbReference type="HAMAP-Rule" id="MF_03150"/>
    </source>
</evidence>
<reference key="1">
    <citation type="journal article" date="2004" name="Nature">
        <title>Genome evolution in yeasts.</title>
        <authorList>
            <person name="Dujon B."/>
            <person name="Sherman D."/>
            <person name="Fischer G."/>
            <person name="Durrens P."/>
            <person name="Casaregola S."/>
            <person name="Lafontaine I."/>
            <person name="de Montigny J."/>
            <person name="Marck C."/>
            <person name="Neuveglise C."/>
            <person name="Talla E."/>
            <person name="Goffard N."/>
            <person name="Frangeul L."/>
            <person name="Aigle M."/>
            <person name="Anthouard V."/>
            <person name="Babour A."/>
            <person name="Barbe V."/>
            <person name="Barnay S."/>
            <person name="Blanchin S."/>
            <person name="Beckerich J.-M."/>
            <person name="Beyne E."/>
            <person name="Bleykasten C."/>
            <person name="Boisrame A."/>
            <person name="Boyer J."/>
            <person name="Cattolico L."/>
            <person name="Confanioleri F."/>
            <person name="de Daruvar A."/>
            <person name="Despons L."/>
            <person name="Fabre E."/>
            <person name="Fairhead C."/>
            <person name="Ferry-Dumazet H."/>
            <person name="Groppi A."/>
            <person name="Hantraye F."/>
            <person name="Hennequin C."/>
            <person name="Jauniaux N."/>
            <person name="Joyet P."/>
            <person name="Kachouri R."/>
            <person name="Kerrest A."/>
            <person name="Koszul R."/>
            <person name="Lemaire M."/>
            <person name="Lesur I."/>
            <person name="Ma L."/>
            <person name="Muller H."/>
            <person name="Nicaud J.-M."/>
            <person name="Nikolski M."/>
            <person name="Oztas S."/>
            <person name="Ozier-Kalogeropoulos O."/>
            <person name="Pellenz S."/>
            <person name="Potier S."/>
            <person name="Richard G.-F."/>
            <person name="Straub M.-L."/>
            <person name="Suleau A."/>
            <person name="Swennen D."/>
            <person name="Tekaia F."/>
            <person name="Wesolowski-Louvel M."/>
            <person name="Westhof E."/>
            <person name="Wirth B."/>
            <person name="Zeniou-Meyer M."/>
            <person name="Zivanovic Y."/>
            <person name="Bolotin-Fukuhara M."/>
            <person name="Thierry A."/>
            <person name="Bouchier C."/>
            <person name="Caudron B."/>
            <person name="Scarpelli C."/>
            <person name="Gaillardin C."/>
            <person name="Weissenbach J."/>
            <person name="Wincker P."/>
            <person name="Souciet J.-L."/>
        </authorList>
    </citation>
    <scope>NUCLEOTIDE SEQUENCE [LARGE SCALE GENOMIC DNA]</scope>
    <source>
        <strain>CLIB 122 / E 150</strain>
    </source>
</reference>
<protein>
    <recommendedName>
        <fullName evidence="1">Glutamyl-tRNA(Gln) amidotransferase subunit A, mitochondrial</fullName>
        <shortName evidence="1">Glu-AdT subunit A</shortName>
        <ecNumber evidence="1">6.3.5.7</ecNumber>
    </recommendedName>
</protein>
<feature type="chain" id="PRO_0000413360" description="Glutamyl-tRNA(Gln) amidotransferase subunit A, mitochondrial">
    <location>
        <begin position="1"/>
        <end position="459"/>
    </location>
</feature>
<feature type="active site" description="Charge relay system" evidence="1">
    <location>
        <position position="37"/>
    </location>
</feature>
<feature type="active site" description="Charge relay system" evidence="1">
    <location>
        <position position="114"/>
    </location>
</feature>
<feature type="active site" description="Acyl-ester intermediate" evidence="1">
    <location>
        <position position="138"/>
    </location>
</feature>
<keyword id="KW-0067">ATP-binding</keyword>
<keyword id="KW-0436">Ligase</keyword>
<keyword id="KW-0496">Mitochondrion</keyword>
<keyword id="KW-0547">Nucleotide-binding</keyword>
<keyword id="KW-0648">Protein biosynthesis</keyword>
<keyword id="KW-1185">Reference proteome</keyword>
<sequence length="459" mass="49970">MENIIKSNPYSNALISTAENPQVAQSGALAGIALAVKDNICTNEMHTTCASGILETFTSPFDATVVDLLKQEGVSIVGKANLDEFGMGSDNANSWFGPVFNPLYPDEPHTPGGSSGGSAAAVAADMCHFALGTDTGGSVRYPAAQCSVIGLKPSYGLISRHGVIAYAQSLDTVGILTKDIDLLEKVFNILNKYDPLDPTSLTPHKRAKLKPPKPHRKLTFGLVKEYNIKGISENVKMAWSQIMDELIKMGHEVVTCSIPAIKNALPAYYAIAPAEASSNFARFDGIRYGSRAPEDRGEHGTLYAPTRQEYFGNEVKRRMWLGTWNLSTDAFNHDYIRSQKIRRILQEDFDEVFNRPNVLSGNEGQKANDEPGVDFIIAPTSNCAPYPLSKLNDSAPVDTYLNDVLTVPASLTGIPSLNIPWKTKQGNVGMQIMGQYGDDLGVMKVGRLLLDKCKELHQD</sequence>
<organism>
    <name type="scientific">Yarrowia lipolytica (strain CLIB 122 / E 150)</name>
    <name type="common">Yeast</name>
    <name type="synonym">Candida lipolytica</name>
    <dbReference type="NCBI Taxonomy" id="284591"/>
    <lineage>
        <taxon>Eukaryota</taxon>
        <taxon>Fungi</taxon>
        <taxon>Dikarya</taxon>
        <taxon>Ascomycota</taxon>
        <taxon>Saccharomycotina</taxon>
        <taxon>Dipodascomycetes</taxon>
        <taxon>Dipodascales</taxon>
        <taxon>Dipodascales incertae sedis</taxon>
        <taxon>Yarrowia</taxon>
    </lineage>
</organism>
<name>GATA_YARLI</name>
<dbReference type="EC" id="6.3.5.7" evidence="1"/>
<dbReference type="EMBL" id="CR382132">
    <property type="protein sequence ID" value="CAG78599.1"/>
    <property type="molecule type" value="Genomic_DNA"/>
</dbReference>
<dbReference type="RefSeq" id="XP_505788.1">
    <property type="nucleotide sequence ID" value="XM_505788.1"/>
</dbReference>
<dbReference type="SMR" id="Q6C0M4"/>
<dbReference type="FunCoup" id="Q6C0M4">
    <property type="interactions" value="359"/>
</dbReference>
<dbReference type="STRING" id="284591.Q6C0M4"/>
<dbReference type="EnsemblFungi" id="CAG78599">
    <property type="protein sequence ID" value="CAG78599"/>
    <property type="gene ID" value="YALI0_F23441g"/>
</dbReference>
<dbReference type="KEGG" id="yli:2908770"/>
<dbReference type="VEuPathDB" id="FungiDB:YALI0_F23441g"/>
<dbReference type="HOGENOM" id="CLU_009600_7_6_1"/>
<dbReference type="InParanoid" id="Q6C0M4"/>
<dbReference type="OMA" id="QPASYCG"/>
<dbReference type="OrthoDB" id="105753at4891"/>
<dbReference type="Proteomes" id="UP000001300">
    <property type="component" value="Chromosome F"/>
</dbReference>
<dbReference type="GO" id="GO:0030956">
    <property type="term" value="C:glutamyl-tRNA(Gln) amidotransferase complex"/>
    <property type="evidence" value="ECO:0000318"/>
    <property type="project" value="GO_Central"/>
</dbReference>
<dbReference type="GO" id="GO:0005739">
    <property type="term" value="C:mitochondrion"/>
    <property type="evidence" value="ECO:0000318"/>
    <property type="project" value="GO_Central"/>
</dbReference>
<dbReference type="GO" id="GO:0005524">
    <property type="term" value="F:ATP binding"/>
    <property type="evidence" value="ECO:0007669"/>
    <property type="project" value="UniProtKB-KW"/>
</dbReference>
<dbReference type="GO" id="GO:0050567">
    <property type="term" value="F:glutaminyl-tRNA synthase (glutamine-hydrolyzing) activity"/>
    <property type="evidence" value="ECO:0000318"/>
    <property type="project" value="GO_Central"/>
</dbReference>
<dbReference type="GO" id="GO:0070681">
    <property type="term" value="P:glutaminyl-tRNAGln biosynthesis via transamidation"/>
    <property type="evidence" value="ECO:0000318"/>
    <property type="project" value="GO_Central"/>
</dbReference>
<dbReference type="GO" id="GO:0032543">
    <property type="term" value="P:mitochondrial translation"/>
    <property type="evidence" value="ECO:0000318"/>
    <property type="project" value="GO_Central"/>
</dbReference>
<dbReference type="Gene3D" id="3.90.1300.10">
    <property type="entry name" value="Amidase signature (AS) domain"/>
    <property type="match status" value="1"/>
</dbReference>
<dbReference type="HAMAP" id="MF_00120">
    <property type="entry name" value="GatA"/>
    <property type="match status" value="1"/>
</dbReference>
<dbReference type="InterPro" id="IPR000120">
    <property type="entry name" value="Amidase"/>
</dbReference>
<dbReference type="InterPro" id="IPR020556">
    <property type="entry name" value="Amidase_CS"/>
</dbReference>
<dbReference type="InterPro" id="IPR023631">
    <property type="entry name" value="Amidase_dom"/>
</dbReference>
<dbReference type="InterPro" id="IPR036928">
    <property type="entry name" value="AS_sf"/>
</dbReference>
<dbReference type="InterPro" id="IPR004412">
    <property type="entry name" value="GatA"/>
</dbReference>
<dbReference type="NCBIfam" id="TIGR00132">
    <property type="entry name" value="gatA"/>
    <property type="match status" value="1"/>
</dbReference>
<dbReference type="PANTHER" id="PTHR11895:SF7">
    <property type="entry name" value="GLUTAMYL-TRNA(GLN) AMIDOTRANSFERASE SUBUNIT A, MITOCHONDRIAL"/>
    <property type="match status" value="1"/>
</dbReference>
<dbReference type="PANTHER" id="PTHR11895">
    <property type="entry name" value="TRANSAMIDASE"/>
    <property type="match status" value="1"/>
</dbReference>
<dbReference type="Pfam" id="PF01425">
    <property type="entry name" value="Amidase"/>
    <property type="match status" value="1"/>
</dbReference>
<dbReference type="SUPFAM" id="SSF75304">
    <property type="entry name" value="Amidase signature (AS) enzymes"/>
    <property type="match status" value="1"/>
</dbReference>
<dbReference type="PROSITE" id="PS00571">
    <property type="entry name" value="AMIDASES"/>
    <property type="match status" value="1"/>
</dbReference>
<accession>Q6C0M4</accession>
<gene>
    <name evidence="1" type="primary">HER2</name>
    <name type="ordered locus">YALI0F23441g</name>
</gene>